<proteinExistence type="inferred from homology"/>
<comment type="function">
    <text evidence="1">Catalyzes the phosphorylation of the hydroxyl group of 4-methyl-5-beta-hydroxyethylthiazole (THZ).</text>
</comment>
<comment type="catalytic activity">
    <reaction evidence="1">
        <text>5-(2-hydroxyethyl)-4-methylthiazole + ATP = 4-methyl-5-(2-phosphooxyethyl)-thiazole + ADP + H(+)</text>
        <dbReference type="Rhea" id="RHEA:24212"/>
        <dbReference type="ChEBI" id="CHEBI:15378"/>
        <dbReference type="ChEBI" id="CHEBI:17957"/>
        <dbReference type="ChEBI" id="CHEBI:30616"/>
        <dbReference type="ChEBI" id="CHEBI:58296"/>
        <dbReference type="ChEBI" id="CHEBI:456216"/>
        <dbReference type="EC" id="2.7.1.50"/>
    </reaction>
</comment>
<comment type="cofactor">
    <cofactor evidence="1">
        <name>Mg(2+)</name>
        <dbReference type="ChEBI" id="CHEBI:18420"/>
    </cofactor>
</comment>
<comment type="pathway">
    <text evidence="1">Cofactor biosynthesis; thiamine diphosphate biosynthesis; 4-methyl-5-(2-phosphoethyl)-thiazole from 5-(2-hydroxyethyl)-4-methylthiazole: step 1/1.</text>
</comment>
<comment type="similarity">
    <text evidence="1">Belongs to the Thz kinase family.</text>
</comment>
<sequence length="285" mass="28923">MTVFADILDTVRRHEPVVHCITNYVTVNDCANMVLAAGGSPIMADDAAEVEDIVALSQALVINIGTLNSRTVESMLVAGRRANSMGKPVVLDPVGAGASALRNSTLQRLLGEVRFAAIKGNASEIGFLAGKDAKARGVDAQDSCLVTEDRLESAAATARHLSESTGAVVVVSGAIDIVAYSGGAWAVRNGHPLMARITGSGCMSAAVMGCCLGVAPYEMPQACLCAVSALGVAGEIAAETMVGGGGEMGGLGGGTGSYRALLLDAMSLLDGLALGSRADVTRIQM</sequence>
<reference key="1">
    <citation type="submission" date="2009-01" db="EMBL/GenBank/DDBJ databases">
        <title>Complete sequence of Desulfovibrio desulfuricans subsp. desulfuricans str. ATCC 27774.</title>
        <authorList>
            <consortium name="US DOE Joint Genome Institute"/>
            <person name="Lucas S."/>
            <person name="Copeland A."/>
            <person name="Lapidus A."/>
            <person name="Glavina del Rio T."/>
            <person name="Tice H."/>
            <person name="Bruce D."/>
            <person name="Goodwin L."/>
            <person name="Pitluck S."/>
            <person name="Sims D."/>
            <person name="Lu M."/>
            <person name="Kiss H."/>
            <person name="Meineke L."/>
            <person name="Brettin T."/>
            <person name="Detter J.C."/>
            <person name="Han C."/>
            <person name="Larimer F."/>
            <person name="Land M."/>
            <person name="Hauser L."/>
            <person name="Kyrpides N."/>
            <person name="Ovchinnikova G."/>
            <person name="Hazen T.C."/>
        </authorList>
    </citation>
    <scope>NUCLEOTIDE SEQUENCE [LARGE SCALE GENOMIC DNA]</scope>
    <source>
        <strain>ATCC 27774 / DSM 6949 / MB</strain>
    </source>
</reference>
<keyword id="KW-0067">ATP-binding</keyword>
<keyword id="KW-0418">Kinase</keyword>
<keyword id="KW-0460">Magnesium</keyword>
<keyword id="KW-0479">Metal-binding</keyword>
<keyword id="KW-0547">Nucleotide-binding</keyword>
<keyword id="KW-0784">Thiamine biosynthesis</keyword>
<keyword id="KW-0808">Transferase</keyword>
<protein>
    <recommendedName>
        <fullName evidence="1">Hydroxyethylthiazole kinase</fullName>
        <ecNumber evidence="1">2.7.1.50</ecNumber>
    </recommendedName>
    <alternativeName>
        <fullName evidence="1">4-methyl-5-beta-hydroxyethylthiazole kinase</fullName>
        <shortName evidence="1">TH kinase</shortName>
        <shortName evidence="1">Thz kinase</shortName>
    </alternativeName>
</protein>
<organism>
    <name type="scientific">Desulfovibrio desulfuricans (strain ATCC 27774 / DSM 6949 / MB)</name>
    <dbReference type="NCBI Taxonomy" id="525146"/>
    <lineage>
        <taxon>Bacteria</taxon>
        <taxon>Pseudomonadati</taxon>
        <taxon>Thermodesulfobacteriota</taxon>
        <taxon>Desulfovibrionia</taxon>
        <taxon>Desulfovibrionales</taxon>
        <taxon>Desulfovibrionaceae</taxon>
        <taxon>Desulfovibrio</taxon>
    </lineage>
</organism>
<gene>
    <name evidence="1" type="primary">thiM</name>
    <name type="ordered locus">Ddes_0467</name>
</gene>
<accession>B8J4C1</accession>
<evidence type="ECO:0000255" key="1">
    <source>
        <dbReference type="HAMAP-Rule" id="MF_00228"/>
    </source>
</evidence>
<dbReference type="EC" id="2.7.1.50" evidence="1"/>
<dbReference type="EMBL" id="CP001358">
    <property type="protein sequence ID" value="ACL48379.1"/>
    <property type="molecule type" value="Genomic_DNA"/>
</dbReference>
<dbReference type="SMR" id="B8J4C1"/>
<dbReference type="STRING" id="525146.Ddes_0467"/>
<dbReference type="KEGG" id="dds:Ddes_0467"/>
<dbReference type="eggNOG" id="COG2145">
    <property type="taxonomic scope" value="Bacteria"/>
</dbReference>
<dbReference type="HOGENOM" id="CLU_019943_0_0_7"/>
<dbReference type="UniPathway" id="UPA00060">
    <property type="reaction ID" value="UER00139"/>
</dbReference>
<dbReference type="GO" id="GO:0005524">
    <property type="term" value="F:ATP binding"/>
    <property type="evidence" value="ECO:0007669"/>
    <property type="project" value="UniProtKB-UniRule"/>
</dbReference>
<dbReference type="GO" id="GO:0004417">
    <property type="term" value="F:hydroxyethylthiazole kinase activity"/>
    <property type="evidence" value="ECO:0007669"/>
    <property type="project" value="UniProtKB-UniRule"/>
</dbReference>
<dbReference type="GO" id="GO:0000287">
    <property type="term" value="F:magnesium ion binding"/>
    <property type="evidence" value="ECO:0007669"/>
    <property type="project" value="UniProtKB-UniRule"/>
</dbReference>
<dbReference type="GO" id="GO:0009228">
    <property type="term" value="P:thiamine biosynthetic process"/>
    <property type="evidence" value="ECO:0007669"/>
    <property type="project" value="UniProtKB-KW"/>
</dbReference>
<dbReference type="GO" id="GO:0009229">
    <property type="term" value="P:thiamine diphosphate biosynthetic process"/>
    <property type="evidence" value="ECO:0007669"/>
    <property type="project" value="UniProtKB-UniRule"/>
</dbReference>
<dbReference type="CDD" id="cd01170">
    <property type="entry name" value="THZ_kinase"/>
    <property type="match status" value="1"/>
</dbReference>
<dbReference type="Gene3D" id="3.40.1190.20">
    <property type="match status" value="1"/>
</dbReference>
<dbReference type="HAMAP" id="MF_00228">
    <property type="entry name" value="Thz_kinase"/>
    <property type="match status" value="1"/>
</dbReference>
<dbReference type="InterPro" id="IPR000417">
    <property type="entry name" value="Hyethyz_kinase"/>
</dbReference>
<dbReference type="InterPro" id="IPR029056">
    <property type="entry name" value="Ribokinase-like"/>
</dbReference>
<dbReference type="NCBIfam" id="NF006830">
    <property type="entry name" value="PRK09355.1"/>
    <property type="match status" value="1"/>
</dbReference>
<dbReference type="Pfam" id="PF02110">
    <property type="entry name" value="HK"/>
    <property type="match status" value="1"/>
</dbReference>
<dbReference type="PIRSF" id="PIRSF000513">
    <property type="entry name" value="Thz_kinase"/>
    <property type="match status" value="1"/>
</dbReference>
<dbReference type="PRINTS" id="PR01099">
    <property type="entry name" value="HYETHTZKNASE"/>
</dbReference>
<dbReference type="SUPFAM" id="SSF53613">
    <property type="entry name" value="Ribokinase-like"/>
    <property type="match status" value="1"/>
</dbReference>
<name>THIM_DESDA</name>
<feature type="chain" id="PRO_0000383854" description="Hydroxyethylthiazole kinase">
    <location>
        <begin position="1"/>
        <end position="285"/>
    </location>
</feature>
<feature type="binding site" evidence="1">
    <location>
        <position position="43"/>
    </location>
    <ligand>
        <name>substrate</name>
    </ligand>
</feature>
<feature type="binding site" evidence="1">
    <location>
        <position position="119"/>
    </location>
    <ligand>
        <name>ATP</name>
        <dbReference type="ChEBI" id="CHEBI:30616"/>
    </ligand>
</feature>
<feature type="binding site" evidence="1">
    <location>
        <position position="172"/>
    </location>
    <ligand>
        <name>ATP</name>
        <dbReference type="ChEBI" id="CHEBI:30616"/>
    </ligand>
</feature>
<feature type="binding site" evidence="1">
    <location>
        <position position="199"/>
    </location>
    <ligand>
        <name>substrate</name>
    </ligand>
</feature>